<dbReference type="EC" id="3.6.4.13"/>
<dbReference type="EMBL" id="GG704911">
    <property type="protein sequence ID" value="EAS35205.3"/>
    <property type="status" value="ALT_INIT"/>
    <property type="molecule type" value="Genomic_DNA"/>
</dbReference>
<dbReference type="RefSeq" id="XP_001246788.2">
    <property type="nucleotide sequence ID" value="XM_001246787.2"/>
</dbReference>
<dbReference type="SMR" id="Q1EA54"/>
<dbReference type="FunCoup" id="Q1EA54">
    <property type="interactions" value="1138"/>
</dbReference>
<dbReference type="STRING" id="246410.Q1EA54"/>
<dbReference type="GeneID" id="4565358"/>
<dbReference type="KEGG" id="cim:CIMG_00559"/>
<dbReference type="InParanoid" id="Q1EA54"/>
<dbReference type="OrthoDB" id="10259640at2759"/>
<dbReference type="Proteomes" id="UP000001261">
    <property type="component" value="Unassembled WGS sequence"/>
</dbReference>
<dbReference type="GO" id="GO:0005730">
    <property type="term" value="C:nucleolus"/>
    <property type="evidence" value="ECO:0007669"/>
    <property type="project" value="UniProtKB-SubCell"/>
</dbReference>
<dbReference type="GO" id="GO:0005524">
    <property type="term" value="F:ATP binding"/>
    <property type="evidence" value="ECO:0007669"/>
    <property type="project" value="UniProtKB-KW"/>
</dbReference>
<dbReference type="GO" id="GO:0016887">
    <property type="term" value="F:ATP hydrolysis activity"/>
    <property type="evidence" value="ECO:0007669"/>
    <property type="project" value="RHEA"/>
</dbReference>
<dbReference type="GO" id="GO:0003723">
    <property type="term" value="F:RNA binding"/>
    <property type="evidence" value="ECO:0007669"/>
    <property type="project" value="UniProtKB-KW"/>
</dbReference>
<dbReference type="GO" id="GO:0003724">
    <property type="term" value="F:RNA helicase activity"/>
    <property type="evidence" value="ECO:0007669"/>
    <property type="project" value="UniProtKB-EC"/>
</dbReference>
<dbReference type="GO" id="GO:0006364">
    <property type="term" value="P:rRNA processing"/>
    <property type="evidence" value="ECO:0007669"/>
    <property type="project" value="UniProtKB-KW"/>
</dbReference>
<dbReference type="CDD" id="cd17942">
    <property type="entry name" value="DEADc_DDX18"/>
    <property type="match status" value="1"/>
</dbReference>
<dbReference type="CDD" id="cd18787">
    <property type="entry name" value="SF2_C_DEAD"/>
    <property type="match status" value="1"/>
</dbReference>
<dbReference type="FunFam" id="3.40.50.300:FF:000379">
    <property type="entry name" value="RNA helicase"/>
    <property type="match status" value="1"/>
</dbReference>
<dbReference type="FunFam" id="3.40.50.300:FF:000460">
    <property type="entry name" value="RNA helicase"/>
    <property type="match status" value="1"/>
</dbReference>
<dbReference type="Gene3D" id="3.40.50.300">
    <property type="entry name" value="P-loop containing nucleotide triphosphate hydrolases"/>
    <property type="match status" value="2"/>
</dbReference>
<dbReference type="InterPro" id="IPR044773">
    <property type="entry name" value="DDX18/Has1_DEADc"/>
</dbReference>
<dbReference type="InterPro" id="IPR011545">
    <property type="entry name" value="DEAD/DEAH_box_helicase_dom"/>
</dbReference>
<dbReference type="InterPro" id="IPR014001">
    <property type="entry name" value="Helicase_ATP-bd"/>
</dbReference>
<dbReference type="InterPro" id="IPR001650">
    <property type="entry name" value="Helicase_C-like"/>
</dbReference>
<dbReference type="InterPro" id="IPR027417">
    <property type="entry name" value="P-loop_NTPase"/>
</dbReference>
<dbReference type="InterPro" id="IPR000629">
    <property type="entry name" value="RNA-helicase_DEAD-box_CS"/>
</dbReference>
<dbReference type="InterPro" id="IPR014014">
    <property type="entry name" value="RNA_helicase_DEAD_Q_motif"/>
</dbReference>
<dbReference type="InterPro" id="IPR025313">
    <property type="entry name" value="SPB4-like_CTE"/>
</dbReference>
<dbReference type="PANTHER" id="PTHR24031">
    <property type="entry name" value="RNA HELICASE"/>
    <property type="match status" value="1"/>
</dbReference>
<dbReference type="Pfam" id="PF13959">
    <property type="entry name" value="CTE_SPB4"/>
    <property type="match status" value="1"/>
</dbReference>
<dbReference type="Pfam" id="PF00270">
    <property type="entry name" value="DEAD"/>
    <property type="match status" value="1"/>
</dbReference>
<dbReference type="Pfam" id="PF00271">
    <property type="entry name" value="Helicase_C"/>
    <property type="match status" value="1"/>
</dbReference>
<dbReference type="SMART" id="SM00487">
    <property type="entry name" value="DEXDc"/>
    <property type="match status" value="1"/>
</dbReference>
<dbReference type="SMART" id="SM01178">
    <property type="entry name" value="DUF4217"/>
    <property type="match status" value="1"/>
</dbReference>
<dbReference type="SMART" id="SM00490">
    <property type="entry name" value="HELICc"/>
    <property type="match status" value="1"/>
</dbReference>
<dbReference type="SUPFAM" id="SSF52540">
    <property type="entry name" value="P-loop containing nucleoside triphosphate hydrolases"/>
    <property type="match status" value="2"/>
</dbReference>
<dbReference type="PROSITE" id="PS00039">
    <property type="entry name" value="DEAD_ATP_HELICASE"/>
    <property type="match status" value="1"/>
</dbReference>
<dbReference type="PROSITE" id="PS51192">
    <property type="entry name" value="HELICASE_ATP_BIND_1"/>
    <property type="match status" value="1"/>
</dbReference>
<dbReference type="PROSITE" id="PS51194">
    <property type="entry name" value="HELICASE_CTER"/>
    <property type="match status" value="1"/>
</dbReference>
<dbReference type="PROSITE" id="PS51195">
    <property type="entry name" value="Q_MOTIF"/>
    <property type="match status" value="1"/>
</dbReference>
<sequence length="604" mass="67706">MPVTMETSKEHSKKRKRKHGGSGNAALTSANAAKSLVKTTLSSKGEASAEKQEMKKRKTEHPSLMEDRVSENVVDEPEEVVEEDSEASQPPVEQDDEQKSESEQQPELPSLNALSLPQTENEPQKFTELNLSEKTLKAIQEMGFETMTEIQRRGIPPLMAGRDVLGAAKTGSGKTLSFLIPAVEMLSALRFKPRNGTGVIVVSPTRELALQIFGVARELMAHHSQTYGIVIGGANRRAEAEKLTKGVNLLIATPGRLLDHLQNTDGFVFKNLKALVIDEADRILEVGFEDEMRQIVKILPSEDRQTMLFSATQTTKVEDLARISLRPGPLYINVDHRKEHSTVEGLEQGYVICDSDKRFLLLFSFLKRNLKKKIIVFFSSCNCVKYHAELLNYIDLPVLDLHGKQKQQKRTNTFFEFCNAKQGTLICTDVAARGLDIPAVDWIIQFDPPDDPRDYIHRVGRTARGANGKGRSLMFLQPSEVGFLKHLKDARVPVVEFEFPAKKIVNVQSQLEKLIGQNYYLNKSAKDGYRSYLQAYASHSLRSVFDVNKLDLVKVAKGFGFPTPPRVDISLGASMSRDKKQTSRRNYGSQPRHAPKFKRKTSDD</sequence>
<proteinExistence type="inferred from homology"/>
<comment type="function">
    <text>ATP-dependent RNA helicase involved in 40S ribosomal subunit biogenesis. Required for the processing and cleavage of 35S pre-rRNA at sites A0, A1, and A2, leading to mature 18S rRNA.</text>
</comment>
<comment type="catalytic activity">
    <reaction>
        <text>ATP + H2O = ADP + phosphate + H(+)</text>
        <dbReference type="Rhea" id="RHEA:13065"/>
        <dbReference type="ChEBI" id="CHEBI:15377"/>
        <dbReference type="ChEBI" id="CHEBI:15378"/>
        <dbReference type="ChEBI" id="CHEBI:30616"/>
        <dbReference type="ChEBI" id="CHEBI:43474"/>
        <dbReference type="ChEBI" id="CHEBI:456216"/>
        <dbReference type="EC" id="3.6.4.13"/>
    </reaction>
</comment>
<comment type="subunit">
    <text evidence="1">Associates in the nucleolus with the 60S and pre-60S ribosomal subunits.</text>
</comment>
<comment type="subcellular location">
    <subcellularLocation>
        <location evidence="1">Nucleus</location>
        <location evidence="1">Nucleolus</location>
    </subcellularLocation>
</comment>
<comment type="domain">
    <text>The Q motif is unique to and characteristic of the DEAD box family of RNA helicases and controls ATP binding and hydrolysis.</text>
</comment>
<comment type="similarity">
    <text evidence="5">Belongs to the DEAD box helicase family. DDX18/HAS1 subfamily.</text>
</comment>
<comment type="sequence caution" evidence="5">
    <conflict type="erroneous initiation">
        <sequence resource="EMBL-CDS" id="EAS35205"/>
    </conflict>
    <text>Extended N-terminus.</text>
</comment>
<protein>
    <recommendedName>
        <fullName>ATP-dependent RNA helicase HAS1</fullName>
        <ecNumber>3.6.4.13</ecNumber>
    </recommendedName>
</protein>
<feature type="chain" id="PRO_0000256006" description="ATP-dependent RNA helicase HAS1">
    <location>
        <begin position="1"/>
        <end position="604"/>
    </location>
</feature>
<feature type="domain" description="Helicase ATP-binding" evidence="2">
    <location>
        <begin position="155"/>
        <end position="331"/>
    </location>
</feature>
<feature type="domain" description="Helicase C-terminal" evidence="3">
    <location>
        <begin position="345"/>
        <end position="515"/>
    </location>
</feature>
<feature type="region of interest" description="Disordered" evidence="4">
    <location>
        <begin position="1"/>
        <end position="126"/>
    </location>
</feature>
<feature type="region of interest" description="Disordered" evidence="4">
    <location>
        <begin position="570"/>
        <end position="604"/>
    </location>
</feature>
<feature type="short sequence motif" description="Q motif">
    <location>
        <begin position="124"/>
        <end position="152"/>
    </location>
</feature>
<feature type="short sequence motif" description="DEAD box">
    <location>
        <begin position="278"/>
        <end position="281"/>
    </location>
</feature>
<feature type="compositionally biased region" description="Basic residues" evidence="4">
    <location>
        <begin position="11"/>
        <end position="20"/>
    </location>
</feature>
<feature type="compositionally biased region" description="Polar residues" evidence="4">
    <location>
        <begin position="25"/>
        <end position="45"/>
    </location>
</feature>
<feature type="compositionally biased region" description="Basic and acidic residues" evidence="4">
    <location>
        <begin position="60"/>
        <end position="70"/>
    </location>
</feature>
<feature type="compositionally biased region" description="Acidic residues" evidence="4">
    <location>
        <begin position="73"/>
        <end position="86"/>
    </location>
</feature>
<feature type="compositionally biased region" description="Polar residues" evidence="4">
    <location>
        <begin position="112"/>
        <end position="121"/>
    </location>
</feature>
<feature type="compositionally biased region" description="Basic residues" evidence="4">
    <location>
        <begin position="593"/>
        <end position="604"/>
    </location>
</feature>
<feature type="binding site" evidence="2">
    <location>
        <begin position="168"/>
        <end position="175"/>
    </location>
    <ligand>
        <name>ATP</name>
        <dbReference type="ChEBI" id="CHEBI:30616"/>
    </ligand>
</feature>
<evidence type="ECO:0000250" key="1"/>
<evidence type="ECO:0000255" key="2">
    <source>
        <dbReference type="PROSITE-ProRule" id="PRU00541"/>
    </source>
</evidence>
<evidence type="ECO:0000255" key="3">
    <source>
        <dbReference type="PROSITE-ProRule" id="PRU00542"/>
    </source>
</evidence>
<evidence type="ECO:0000256" key="4">
    <source>
        <dbReference type="SAM" id="MobiDB-lite"/>
    </source>
</evidence>
<evidence type="ECO:0000305" key="5"/>
<gene>
    <name type="primary">HAS1</name>
    <name type="ORF">CIMG_00559</name>
</gene>
<organism>
    <name type="scientific">Coccidioides immitis (strain RS)</name>
    <name type="common">Valley fever fungus</name>
    <dbReference type="NCBI Taxonomy" id="246410"/>
    <lineage>
        <taxon>Eukaryota</taxon>
        <taxon>Fungi</taxon>
        <taxon>Dikarya</taxon>
        <taxon>Ascomycota</taxon>
        <taxon>Pezizomycotina</taxon>
        <taxon>Eurotiomycetes</taxon>
        <taxon>Eurotiomycetidae</taxon>
        <taxon>Onygenales</taxon>
        <taxon>Onygenaceae</taxon>
        <taxon>Coccidioides</taxon>
    </lineage>
</organism>
<reference key="1">
    <citation type="journal article" date="2009" name="Genome Res.">
        <title>Comparative genomic analyses of the human fungal pathogens Coccidioides and their relatives.</title>
        <authorList>
            <person name="Sharpton T.J."/>
            <person name="Stajich J.E."/>
            <person name="Rounsley S.D."/>
            <person name="Gardner M.J."/>
            <person name="Wortman J.R."/>
            <person name="Jordar V.S."/>
            <person name="Maiti R."/>
            <person name="Kodira C.D."/>
            <person name="Neafsey D.E."/>
            <person name="Zeng Q."/>
            <person name="Hung C.-Y."/>
            <person name="McMahan C."/>
            <person name="Muszewska A."/>
            <person name="Grynberg M."/>
            <person name="Mandel M.A."/>
            <person name="Kellner E.M."/>
            <person name="Barker B.M."/>
            <person name="Galgiani J.N."/>
            <person name="Orbach M.J."/>
            <person name="Kirkland T.N."/>
            <person name="Cole G.T."/>
            <person name="Henn M.R."/>
            <person name="Birren B.W."/>
            <person name="Taylor J.W."/>
        </authorList>
    </citation>
    <scope>NUCLEOTIDE SEQUENCE [LARGE SCALE GENOMIC DNA]</scope>
    <source>
        <strain>RS</strain>
    </source>
</reference>
<reference key="2">
    <citation type="journal article" date="2010" name="Genome Res.">
        <title>Population genomic sequencing of Coccidioides fungi reveals recent hybridization and transposon control.</title>
        <authorList>
            <person name="Neafsey D.E."/>
            <person name="Barker B.M."/>
            <person name="Sharpton T.J."/>
            <person name="Stajich J.E."/>
            <person name="Park D.J."/>
            <person name="Whiston E."/>
            <person name="Hung C.-Y."/>
            <person name="McMahan C."/>
            <person name="White J."/>
            <person name="Sykes S."/>
            <person name="Heiman D."/>
            <person name="Young S."/>
            <person name="Zeng Q."/>
            <person name="Abouelleil A."/>
            <person name="Aftuck L."/>
            <person name="Bessette D."/>
            <person name="Brown A."/>
            <person name="FitzGerald M."/>
            <person name="Lui A."/>
            <person name="Macdonald J.P."/>
            <person name="Priest M."/>
            <person name="Orbach M.J."/>
            <person name="Galgiani J.N."/>
            <person name="Kirkland T.N."/>
            <person name="Cole G.T."/>
            <person name="Birren B.W."/>
            <person name="Henn M.R."/>
            <person name="Taylor J.W."/>
            <person name="Rounsley S.D."/>
        </authorList>
    </citation>
    <scope>GENOME REANNOTATION</scope>
    <source>
        <strain>RS</strain>
    </source>
</reference>
<name>HAS1_COCIM</name>
<keyword id="KW-0067">ATP-binding</keyword>
<keyword id="KW-0347">Helicase</keyword>
<keyword id="KW-0378">Hydrolase</keyword>
<keyword id="KW-0547">Nucleotide-binding</keyword>
<keyword id="KW-0539">Nucleus</keyword>
<keyword id="KW-1185">Reference proteome</keyword>
<keyword id="KW-0690">Ribosome biogenesis</keyword>
<keyword id="KW-0694">RNA-binding</keyword>
<keyword id="KW-0698">rRNA processing</keyword>
<accession>Q1EA54</accession>
<accession>J3KHC1</accession>